<proteinExistence type="inferred from homology"/>
<protein>
    <recommendedName>
        <fullName evidence="1">Glutamate--tRNA ligase 1</fullName>
        <ecNumber evidence="1">6.1.1.17</ecNumber>
    </recommendedName>
    <alternativeName>
        <fullName evidence="1">Glutamyl-tRNA synthetase 1</fullName>
        <shortName evidence="1">GluRS 1</shortName>
    </alternativeName>
</protein>
<comment type="function">
    <text evidence="1">Catalyzes the attachment of glutamate to tRNA(Glu) in a two-step reaction: glutamate is first activated by ATP to form Glu-AMP and then transferred to the acceptor end of tRNA(Glu).</text>
</comment>
<comment type="catalytic activity">
    <reaction evidence="1">
        <text>tRNA(Glu) + L-glutamate + ATP = L-glutamyl-tRNA(Glu) + AMP + diphosphate</text>
        <dbReference type="Rhea" id="RHEA:23540"/>
        <dbReference type="Rhea" id="RHEA-COMP:9663"/>
        <dbReference type="Rhea" id="RHEA-COMP:9680"/>
        <dbReference type="ChEBI" id="CHEBI:29985"/>
        <dbReference type="ChEBI" id="CHEBI:30616"/>
        <dbReference type="ChEBI" id="CHEBI:33019"/>
        <dbReference type="ChEBI" id="CHEBI:78442"/>
        <dbReference type="ChEBI" id="CHEBI:78520"/>
        <dbReference type="ChEBI" id="CHEBI:456215"/>
        <dbReference type="EC" id="6.1.1.17"/>
    </reaction>
</comment>
<comment type="subunit">
    <text evidence="1">Monomer.</text>
</comment>
<comment type="subcellular location">
    <subcellularLocation>
        <location evidence="1">Cytoplasm</location>
    </subcellularLocation>
</comment>
<comment type="similarity">
    <text evidence="1">Belongs to the class-I aminoacyl-tRNA synthetase family. Glutamate--tRNA ligase type 1 subfamily.</text>
</comment>
<sequence>MTKVRFAPSPTGKLHVGNVRTAIFNYLFARKAGGTFVLRIDDTDVERSTKAYEDGIRADLTWLGISWDETFKQSDRFDRYEAAAETLKAKGLLYPCYETGEDLDRKRRLQMANGRPPVYDRAALDLTDAEKAGFEAEGRKPHWRFKLSGNPVQWDDMVRGHVSIETSSLSDPILIREDGSFLYTLPSVLDDIESEITHIIRGEDHTTNSGAQIEIFEALGGKAPIFGHQALLVGADGGKLSKRTGSLGIADLRDVDGLEPMAIMSLLARIGTSDPVEAFADVEGILEGFDLGKLSRSPARFDDEELKRVNAKLLHAMPYDVAQPKLAVLGADKGEAVWEAVRPNLETLADAKAWAVLIDGPVTPVIEEPDYAAAAAQHLPAGELDGDSWSVWTNALKEATGRKGKQLFMPLRLMLTGEARGPEMAVLLPLIGRDKVLKRLAGEAA</sequence>
<reference key="1">
    <citation type="submission" date="2006-08" db="EMBL/GenBank/DDBJ databases">
        <title>Complete sequence of Maricaulis maris MCS10.</title>
        <authorList>
            <consortium name="US DOE Joint Genome Institute"/>
            <person name="Copeland A."/>
            <person name="Lucas S."/>
            <person name="Lapidus A."/>
            <person name="Barry K."/>
            <person name="Detter J.C."/>
            <person name="Glavina del Rio T."/>
            <person name="Hammon N."/>
            <person name="Israni S."/>
            <person name="Dalin E."/>
            <person name="Tice H."/>
            <person name="Pitluck S."/>
            <person name="Saunders E."/>
            <person name="Brettin T."/>
            <person name="Bruce D."/>
            <person name="Han C."/>
            <person name="Tapia R."/>
            <person name="Gilna P."/>
            <person name="Schmutz J."/>
            <person name="Larimer F."/>
            <person name="Land M."/>
            <person name="Hauser L."/>
            <person name="Kyrpides N."/>
            <person name="Mikhailova N."/>
            <person name="Viollier P."/>
            <person name="Stephens C."/>
            <person name="Richardson P."/>
        </authorList>
    </citation>
    <scope>NUCLEOTIDE SEQUENCE [LARGE SCALE GENOMIC DNA]</scope>
    <source>
        <strain>MCS10</strain>
    </source>
</reference>
<evidence type="ECO:0000255" key="1">
    <source>
        <dbReference type="HAMAP-Rule" id="MF_00022"/>
    </source>
</evidence>
<gene>
    <name evidence="1" type="primary">gltX1</name>
    <name type="ordered locus">Mmar10_0986</name>
</gene>
<accession>Q0AR08</accession>
<feature type="chain" id="PRO_0000367703" description="Glutamate--tRNA ligase 1">
    <location>
        <begin position="1"/>
        <end position="445"/>
    </location>
</feature>
<feature type="short sequence motif" description="'HIGH' region" evidence="1">
    <location>
        <begin position="8"/>
        <end position="18"/>
    </location>
</feature>
<feature type="short sequence motif" description="'KMSKS' region" evidence="1">
    <location>
        <begin position="239"/>
        <end position="243"/>
    </location>
</feature>
<feature type="binding site" evidence="1">
    <location>
        <position position="242"/>
    </location>
    <ligand>
        <name>ATP</name>
        <dbReference type="ChEBI" id="CHEBI:30616"/>
    </ligand>
</feature>
<dbReference type="EC" id="6.1.1.17" evidence="1"/>
<dbReference type="EMBL" id="CP000449">
    <property type="protein sequence ID" value="ABI65279.1"/>
    <property type="molecule type" value="Genomic_DNA"/>
</dbReference>
<dbReference type="RefSeq" id="WP_011642926.1">
    <property type="nucleotide sequence ID" value="NC_008347.1"/>
</dbReference>
<dbReference type="SMR" id="Q0AR08"/>
<dbReference type="STRING" id="394221.Mmar10_0986"/>
<dbReference type="KEGG" id="mmr:Mmar10_0986"/>
<dbReference type="eggNOG" id="COG0008">
    <property type="taxonomic scope" value="Bacteria"/>
</dbReference>
<dbReference type="HOGENOM" id="CLU_015768_6_1_5"/>
<dbReference type="OrthoDB" id="9807503at2"/>
<dbReference type="Proteomes" id="UP000001964">
    <property type="component" value="Chromosome"/>
</dbReference>
<dbReference type="GO" id="GO:0005737">
    <property type="term" value="C:cytoplasm"/>
    <property type="evidence" value="ECO:0007669"/>
    <property type="project" value="UniProtKB-SubCell"/>
</dbReference>
<dbReference type="GO" id="GO:0005524">
    <property type="term" value="F:ATP binding"/>
    <property type="evidence" value="ECO:0007669"/>
    <property type="project" value="UniProtKB-UniRule"/>
</dbReference>
<dbReference type="GO" id="GO:0004818">
    <property type="term" value="F:glutamate-tRNA ligase activity"/>
    <property type="evidence" value="ECO:0007669"/>
    <property type="project" value="UniProtKB-UniRule"/>
</dbReference>
<dbReference type="GO" id="GO:0000049">
    <property type="term" value="F:tRNA binding"/>
    <property type="evidence" value="ECO:0007669"/>
    <property type="project" value="InterPro"/>
</dbReference>
<dbReference type="GO" id="GO:0006424">
    <property type="term" value="P:glutamyl-tRNA aminoacylation"/>
    <property type="evidence" value="ECO:0007669"/>
    <property type="project" value="UniProtKB-UniRule"/>
</dbReference>
<dbReference type="Gene3D" id="1.10.10.350">
    <property type="match status" value="1"/>
</dbReference>
<dbReference type="Gene3D" id="3.40.50.620">
    <property type="entry name" value="HUPs"/>
    <property type="match status" value="1"/>
</dbReference>
<dbReference type="HAMAP" id="MF_00022">
    <property type="entry name" value="Glu_tRNA_synth_type1"/>
    <property type="match status" value="1"/>
</dbReference>
<dbReference type="InterPro" id="IPR045462">
    <property type="entry name" value="aa-tRNA-synth_I_cd-bd"/>
</dbReference>
<dbReference type="InterPro" id="IPR020751">
    <property type="entry name" value="aa-tRNA-synth_I_codon-bd_sub2"/>
</dbReference>
<dbReference type="InterPro" id="IPR001412">
    <property type="entry name" value="aa-tRNA-synth_I_CS"/>
</dbReference>
<dbReference type="InterPro" id="IPR008925">
    <property type="entry name" value="aa_tRNA-synth_I_cd-bd_sf"/>
</dbReference>
<dbReference type="InterPro" id="IPR004527">
    <property type="entry name" value="Glu-tRNA-ligase_bac/mito"/>
</dbReference>
<dbReference type="InterPro" id="IPR000924">
    <property type="entry name" value="Glu/Gln-tRNA-synth"/>
</dbReference>
<dbReference type="InterPro" id="IPR020058">
    <property type="entry name" value="Glu/Gln-tRNA-synth_Ib_cat-dom"/>
</dbReference>
<dbReference type="InterPro" id="IPR049940">
    <property type="entry name" value="GluQ/Sye"/>
</dbReference>
<dbReference type="InterPro" id="IPR014729">
    <property type="entry name" value="Rossmann-like_a/b/a_fold"/>
</dbReference>
<dbReference type="NCBIfam" id="TIGR00464">
    <property type="entry name" value="gltX_bact"/>
    <property type="match status" value="1"/>
</dbReference>
<dbReference type="PANTHER" id="PTHR43311">
    <property type="entry name" value="GLUTAMATE--TRNA LIGASE"/>
    <property type="match status" value="1"/>
</dbReference>
<dbReference type="PANTHER" id="PTHR43311:SF2">
    <property type="entry name" value="GLUTAMATE--TRNA LIGASE, MITOCHONDRIAL-RELATED"/>
    <property type="match status" value="1"/>
</dbReference>
<dbReference type="Pfam" id="PF19269">
    <property type="entry name" value="Anticodon_2"/>
    <property type="match status" value="1"/>
</dbReference>
<dbReference type="Pfam" id="PF00749">
    <property type="entry name" value="tRNA-synt_1c"/>
    <property type="match status" value="1"/>
</dbReference>
<dbReference type="PRINTS" id="PR00987">
    <property type="entry name" value="TRNASYNTHGLU"/>
</dbReference>
<dbReference type="SUPFAM" id="SSF48163">
    <property type="entry name" value="An anticodon-binding domain of class I aminoacyl-tRNA synthetases"/>
    <property type="match status" value="1"/>
</dbReference>
<dbReference type="SUPFAM" id="SSF52374">
    <property type="entry name" value="Nucleotidylyl transferase"/>
    <property type="match status" value="1"/>
</dbReference>
<dbReference type="PROSITE" id="PS00178">
    <property type="entry name" value="AA_TRNA_LIGASE_I"/>
    <property type="match status" value="1"/>
</dbReference>
<name>SYE1_MARMM</name>
<keyword id="KW-0030">Aminoacyl-tRNA synthetase</keyword>
<keyword id="KW-0067">ATP-binding</keyword>
<keyword id="KW-0963">Cytoplasm</keyword>
<keyword id="KW-0436">Ligase</keyword>
<keyword id="KW-0547">Nucleotide-binding</keyword>
<keyword id="KW-0648">Protein biosynthesis</keyword>
<keyword id="KW-1185">Reference proteome</keyword>
<organism>
    <name type="scientific">Maricaulis maris (strain MCS10)</name>
    <name type="common">Caulobacter maris</name>
    <dbReference type="NCBI Taxonomy" id="394221"/>
    <lineage>
        <taxon>Bacteria</taxon>
        <taxon>Pseudomonadati</taxon>
        <taxon>Pseudomonadota</taxon>
        <taxon>Alphaproteobacteria</taxon>
        <taxon>Maricaulales</taxon>
        <taxon>Maricaulaceae</taxon>
        <taxon>Maricaulis</taxon>
    </lineage>
</organism>